<feature type="chain" id="PRO_1000021034" description="Inner membrane-spanning protein YciB">
    <location>
        <begin position="1"/>
        <end position="199"/>
    </location>
</feature>
<feature type="transmembrane region" description="Helical" evidence="1">
    <location>
        <begin position="7"/>
        <end position="27"/>
    </location>
</feature>
<feature type="transmembrane region" description="Helical" evidence="1">
    <location>
        <begin position="32"/>
        <end position="52"/>
    </location>
</feature>
<feature type="transmembrane region" description="Helical" evidence="1">
    <location>
        <begin position="56"/>
        <end position="76"/>
    </location>
</feature>
<feature type="transmembrane region" description="Helical" evidence="1">
    <location>
        <begin position="93"/>
        <end position="113"/>
    </location>
</feature>
<feature type="transmembrane region" description="Helical" evidence="1">
    <location>
        <begin position="126"/>
        <end position="146"/>
    </location>
</feature>
<feature type="transmembrane region" description="Helical" evidence="1">
    <location>
        <begin position="153"/>
        <end position="173"/>
    </location>
</feature>
<reference key="1">
    <citation type="submission" date="2006-03" db="EMBL/GenBank/DDBJ databases">
        <title>Complete sequence of chromosome of Nitrobacter hamburgensis X14.</title>
        <authorList>
            <consortium name="US DOE Joint Genome Institute"/>
            <person name="Copeland A."/>
            <person name="Lucas S."/>
            <person name="Lapidus A."/>
            <person name="Barry K."/>
            <person name="Detter J.C."/>
            <person name="Glavina del Rio T."/>
            <person name="Hammon N."/>
            <person name="Israni S."/>
            <person name="Dalin E."/>
            <person name="Tice H."/>
            <person name="Pitluck S."/>
            <person name="Chain P."/>
            <person name="Malfatti S."/>
            <person name="Shin M."/>
            <person name="Vergez L."/>
            <person name="Schmutz J."/>
            <person name="Larimer F."/>
            <person name="Land M."/>
            <person name="Hauser L."/>
            <person name="Kyrpides N."/>
            <person name="Ivanova N."/>
            <person name="Ward B."/>
            <person name="Arp D."/>
            <person name="Klotz M."/>
            <person name="Stein L."/>
            <person name="O'Mullan G."/>
            <person name="Starkenburg S."/>
            <person name="Sayavedra L."/>
            <person name="Poret-Peterson A.T."/>
            <person name="Gentry M.E."/>
            <person name="Bruce D."/>
            <person name="Richardson P."/>
        </authorList>
    </citation>
    <scope>NUCLEOTIDE SEQUENCE [LARGE SCALE GENOMIC DNA]</scope>
    <source>
        <strain>DSM 10229 / NCIMB 13809 / X14</strain>
    </source>
</reference>
<accession>Q1QR53</accession>
<dbReference type="EMBL" id="CP000319">
    <property type="protein sequence ID" value="ABE61294.1"/>
    <property type="molecule type" value="Genomic_DNA"/>
</dbReference>
<dbReference type="RefSeq" id="WP_011508998.1">
    <property type="nucleotide sequence ID" value="NC_007964.1"/>
</dbReference>
<dbReference type="STRING" id="323097.Nham_0403"/>
<dbReference type="KEGG" id="nha:Nham_0403"/>
<dbReference type="eggNOG" id="COG2917">
    <property type="taxonomic scope" value="Bacteria"/>
</dbReference>
<dbReference type="HOGENOM" id="CLU_089554_1_1_5"/>
<dbReference type="OrthoDB" id="9788219at2"/>
<dbReference type="Proteomes" id="UP000001953">
    <property type="component" value="Chromosome"/>
</dbReference>
<dbReference type="GO" id="GO:0005886">
    <property type="term" value="C:plasma membrane"/>
    <property type="evidence" value="ECO:0007669"/>
    <property type="project" value="UniProtKB-SubCell"/>
</dbReference>
<dbReference type="HAMAP" id="MF_00189">
    <property type="entry name" value="YciB"/>
    <property type="match status" value="1"/>
</dbReference>
<dbReference type="InterPro" id="IPR006008">
    <property type="entry name" value="YciB"/>
</dbReference>
<dbReference type="NCBIfam" id="TIGR00997">
    <property type="entry name" value="ispZ"/>
    <property type="match status" value="1"/>
</dbReference>
<dbReference type="NCBIfam" id="NF001323">
    <property type="entry name" value="PRK00259.1-1"/>
    <property type="match status" value="1"/>
</dbReference>
<dbReference type="PANTHER" id="PTHR36917:SF1">
    <property type="entry name" value="INNER MEMBRANE-SPANNING PROTEIN YCIB"/>
    <property type="match status" value="1"/>
</dbReference>
<dbReference type="PANTHER" id="PTHR36917">
    <property type="entry name" value="INTRACELLULAR SEPTATION PROTEIN A-RELATED"/>
    <property type="match status" value="1"/>
</dbReference>
<dbReference type="Pfam" id="PF04279">
    <property type="entry name" value="IspA"/>
    <property type="match status" value="1"/>
</dbReference>
<evidence type="ECO:0000255" key="1">
    <source>
        <dbReference type="HAMAP-Rule" id="MF_00189"/>
    </source>
</evidence>
<keyword id="KW-0997">Cell inner membrane</keyword>
<keyword id="KW-1003">Cell membrane</keyword>
<keyword id="KW-0472">Membrane</keyword>
<keyword id="KW-1185">Reference proteome</keyword>
<keyword id="KW-0812">Transmembrane</keyword>
<keyword id="KW-1133">Transmembrane helix</keyword>
<gene>
    <name evidence="1" type="primary">yciB</name>
    <name type="ordered locus">Nham_0403</name>
</gene>
<organism>
    <name type="scientific">Nitrobacter hamburgensis (strain DSM 10229 / NCIMB 13809 / X14)</name>
    <dbReference type="NCBI Taxonomy" id="323097"/>
    <lineage>
        <taxon>Bacteria</taxon>
        <taxon>Pseudomonadati</taxon>
        <taxon>Pseudomonadota</taxon>
        <taxon>Alphaproteobacteria</taxon>
        <taxon>Hyphomicrobiales</taxon>
        <taxon>Nitrobacteraceae</taxon>
        <taxon>Nitrobacter</taxon>
    </lineage>
</organism>
<proteinExistence type="inferred from homology"/>
<sequence length="199" mass="22254">MDKKQPHPLFKLATELGPLLVFFAANAKFNLFVATAAFMVAIVAAMIASYVVTRHIPLMALVTGIVVIVFGTLTLVLHDETFIKVKPTIIYSLFAGVLGGGLLFGRSFIAIMFDQVFNLTPRGWQVLTLRWALFFFGMAILNELIWRTQSTDFWVNFKVFGAVPLTMIFAMMQMPLTKRYHLEPATLEASDASEGDVRK</sequence>
<comment type="function">
    <text evidence="1">Plays a role in cell envelope biogenesis, maintenance of cell envelope integrity and membrane homeostasis.</text>
</comment>
<comment type="subcellular location">
    <subcellularLocation>
        <location evidence="1">Cell inner membrane</location>
        <topology evidence="1">Multi-pass membrane protein</topology>
    </subcellularLocation>
</comment>
<comment type="similarity">
    <text evidence="1">Belongs to the YciB family.</text>
</comment>
<protein>
    <recommendedName>
        <fullName evidence="1">Inner membrane-spanning protein YciB</fullName>
    </recommendedName>
</protein>
<name>YCIB_NITHX</name>